<reference key="1">
    <citation type="journal article" date="2013" name="Proc. Natl. Acad. Sci. U.S.A.">
        <title>Polynucleobacter necessarius, a model for genome reduction in both free-living and symbiotic bacteria.</title>
        <authorList>
            <person name="Boscaro V."/>
            <person name="Felletti M."/>
            <person name="Vannini C."/>
            <person name="Ackerman M.S."/>
            <person name="Chain P.S."/>
            <person name="Malfatti S."/>
            <person name="Vergez L.M."/>
            <person name="Shin M."/>
            <person name="Doak T.G."/>
            <person name="Lynch M."/>
            <person name="Petroni G."/>
        </authorList>
    </citation>
    <scope>NUCLEOTIDE SEQUENCE [LARGE SCALE GENOMIC DNA]</scope>
    <source>
        <strain>STIR1</strain>
    </source>
</reference>
<evidence type="ECO:0000255" key="1">
    <source>
        <dbReference type="HAMAP-Rule" id="MF_00537"/>
    </source>
</evidence>
<evidence type="ECO:0000305" key="2"/>
<protein>
    <recommendedName>
        <fullName evidence="1">Small ribosomal subunit protein uS14</fullName>
    </recommendedName>
    <alternativeName>
        <fullName evidence="2">30S ribosomal protein S14</fullName>
    </alternativeName>
</protein>
<comment type="function">
    <text evidence="1">Binds 16S rRNA, required for the assembly of 30S particles and may also be responsible for determining the conformation of the 16S rRNA at the A site.</text>
</comment>
<comment type="subunit">
    <text evidence="1">Part of the 30S ribosomal subunit. Contacts proteins S3 and S10.</text>
</comment>
<comment type="similarity">
    <text evidence="1">Belongs to the universal ribosomal protein uS14 family.</text>
</comment>
<feature type="chain" id="PRO_1000128490" description="Small ribosomal subunit protein uS14">
    <location>
        <begin position="1"/>
        <end position="101"/>
    </location>
</feature>
<keyword id="KW-0687">Ribonucleoprotein</keyword>
<keyword id="KW-0689">Ribosomal protein</keyword>
<keyword id="KW-0694">RNA-binding</keyword>
<keyword id="KW-0699">rRNA-binding</keyword>
<name>RS14_POLNS</name>
<accession>B1XSR4</accession>
<proteinExistence type="inferred from homology"/>
<organism>
    <name type="scientific">Polynucleobacter necessarius subsp. necessarius (strain STIR1)</name>
    <dbReference type="NCBI Taxonomy" id="452638"/>
    <lineage>
        <taxon>Bacteria</taxon>
        <taxon>Pseudomonadati</taxon>
        <taxon>Pseudomonadota</taxon>
        <taxon>Betaproteobacteria</taxon>
        <taxon>Burkholderiales</taxon>
        <taxon>Burkholderiaceae</taxon>
        <taxon>Polynucleobacter</taxon>
    </lineage>
</organism>
<sequence>MAKLSLIERENKRAKTVEKYTAKRAELKAIIADQSRSDEERYEARLKLQALPRNASPIRQRNRCSLTGRPRGTFRKFGLARSKIREIAFRGEIPGLTKASW</sequence>
<dbReference type="EMBL" id="CP001010">
    <property type="protein sequence ID" value="ACB43391.1"/>
    <property type="molecule type" value="Genomic_DNA"/>
</dbReference>
<dbReference type="SMR" id="B1XSR4"/>
<dbReference type="STRING" id="452638.Pnec_0063"/>
<dbReference type="KEGG" id="pne:Pnec_0063"/>
<dbReference type="eggNOG" id="COG0199">
    <property type="taxonomic scope" value="Bacteria"/>
</dbReference>
<dbReference type="HOGENOM" id="CLU_139869_0_1_4"/>
<dbReference type="OrthoDB" id="9810484at2"/>
<dbReference type="GO" id="GO:0005737">
    <property type="term" value="C:cytoplasm"/>
    <property type="evidence" value="ECO:0007669"/>
    <property type="project" value="UniProtKB-ARBA"/>
</dbReference>
<dbReference type="GO" id="GO:0015935">
    <property type="term" value="C:small ribosomal subunit"/>
    <property type="evidence" value="ECO:0007669"/>
    <property type="project" value="TreeGrafter"/>
</dbReference>
<dbReference type="GO" id="GO:0019843">
    <property type="term" value="F:rRNA binding"/>
    <property type="evidence" value="ECO:0007669"/>
    <property type="project" value="UniProtKB-UniRule"/>
</dbReference>
<dbReference type="GO" id="GO:0003735">
    <property type="term" value="F:structural constituent of ribosome"/>
    <property type="evidence" value="ECO:0007669"/>
    <property type="project" value="InterPro"/>
</dbReference>
<dbReference type="GO" id="GO:0006412">
    <property type="term" value="P:translation"/>
    <property type="evidence" value="ECO:0007669"/>
    <property type="project" value="UniProtKB-UniRule"/>
</dbReference>
<dbReference type="FunFam" id="1.10.287.1480:FF:000001">
    <property type="entry name" value="30S ribosomal protein S14"/>
    <property type="match status" value="1"/>
</dbReference>
<dbReference type="Gene3D" id="1.10.287.1480">
    <property type="match status" value="1"/>
</dbReference>
<dbReference type="HAMAP" id="MF_00537">
    <property type="entry name" value="Ribosomal_uS14_1"/>
    <property type="match status" value="1"/>
</dbReference>
<dbReference type="InterPro" id="IPR001209">
    <property type="entry name" value="Ribosomal_uS14"/>
</dbReference>
<dbReference type="InterPro" id="IPR023036">
    <property type="entry name" value="Ribosomal_uS14_bac/plastid"/>
</dbReference>
<dbReference type="NCBIfam" id="NF006477">
    <property type="entry name" value="PRK08881.1"/>
    <property type="match status" value="1"/>
</dbReference>
<dbReference type="PANTHER" id="PTHR19836">
    <property type="entry name" value="30S RIBOSOMAL PROTEIN S14"/>
    <property type="match status" value="1"/>
</dbReference>
<dbReference type="PANTHER" id="PTHR19836:SF19">
    <property type="entry name" value="SMALL RIBOSOMAL SUBUNIT PROTEIN US14M"/>
    <property type="match status" value="1"/>
</dbReference>
<dbReference type="Pfam" id="PF00253">
    <property type="entry name" value="Ribosomal_S14"/>
    <property type="match status" value="1"/>
</dbReference>
<dbReference type="SUPFAM" id="SSF57716">
    <property type="entry name" value="Glucocorticoid receptor-like (DNA-binding domain)"/>
    <property type="match status" value="1"/>
</dbReference>
<gene>
    <name evidence="1" type="primary">rpsN</name>
    <name type="ordered locus">Pnec_0063</name>
</gene>